<gene>
    <name evidence="5" type="primary">ELO4A</name>
    <name evidence="7" type="ORF">Tc00.1047053510989.10</name>
</gene>
<name>ELO4A_TRYCC</name>
<accession>Q4D5J7</accession>
<organism evidence="8">
    <name type="scientific">Trypanosoma cruzi (strain CL Brener)</name>
    <dbReference type="NCBI Taxonomy" id="353153"/>
    <lineage>
        <taxon>Eukaryota</taxon>
        <taxon>Discoba</taxon>
        <taxon>Euglenozoa</taxon>
        <taxon>Kinetoplastea</taxon>
        <taxon>Metakinetoplastina</taxon>
        <taxon>Trypanosomatida</taxon>
        <taxon>Trypanosomatidae</taxon>
        <taxon>Trypanosoma</taxon>
        <taxon>Schizotrypanum</taxon>
    </lineage>
</organism>
<protein>
    <recommendedName>
        <fullName evidence="5">Very long chain fatty acid elongase 4</fullName>
        <shortName evidence="5">TcELO4</shortName>
        <ecNumber evidence="3">2.3.1.199</ecNumber>
    </recommendedName>
    <alternativeName>
        <fullName evidence="3">Elongation of fatty acids protein</fullName>
    </alternativeName>
    <alternativeName>
        <fullName evidence="3">Very-long-chain 3-oxoacyl-CoA synthase</fullName>
    </alternativeName>
</protein>
<feature type="chain" id="PRO_0000459371" description="Very long chain fatty acid elongase 4">
    <location>
        <begin position="1"/>
        <end position="287"/>
    </location>
</feature>
<feature type="transmembrane region" description="Helical" evidence="2">
    <location>
        <begin position="33"/>
        <end position="53"/>
    </location>
</feature>
<feature type="transmembrane region" description="Helical" evidence="2">
    <location>
        <begin position="64"/>
        <end position="84"/>
    </location>
</feature>
<feature type="transmembrane region" description="Helical" evidence="2">
    <location>
        <begin position="115"/>
        <end position="135"/>
    </location>
</feature>
<feature type="transmembrane region" description="Helical" evidence="2">
    <location>
        <begin position="150"/>
        <end position="170"/>
    </location>
</feature>
<feature type="transmembrane region" description="Helical" evidence="2">
    <location>
        <begin position="172"/>
        <end position="192"/>
    </location>
</feature>
<feature type="transmembrane region" description="Helical" evidence="2">
    <location>
        <begin position="199"/>
        <end position="219"/>
    </location>
</feature>
<feature type="transmembrane region" description="Helical" evidence="2">
    <location>
        <begin position="241"/>
        <end position="261"/>
    </location>
</feature>
<feature type="short sequence motif" description="HxxHH motif" evidence="5">
    <location>
        <begin position="145"/>
        <end position="149"/>
    </location>
</feature>
<feature type="active site" description="Nucleophile" evidence="1">
    <location>
        <position position="148"/>
    </location>
</feature>
<feature type="sequence variant" evidence="4">
    <original>R</original>
    <variation>C</variation>
    <location>
        <position position="12"/>
    </location>
</feature>
<keyword id="KW-0275">Fatty acid biosynthesis</keyword>
<keyword id="KW-0276">Fatty acid metabolism</keyword>
<keyword id="KW-0444">Lipid biosynthesis</keyword>
<keyword id="KW-0443">Lipid metabolism</keyword>
<keyword id="KW-0472">Membrane</keyword>
<keyword id="KW-1185">Reference proteome</keyword>
<keyword id="KW-0808">Transferase</keyword>
<keyword id="KW-0812">Transmembrane</keyword>
<keyword id="KW-1133">Transmembrane helix</keyword>
<dbReference type="EC" id="2.3.1.199" evidence="3"/>
<dbReference type="EMBL" id="AAHK01000979">
    <property type="protein sequence ID" value="EAN87793.1"/>
    <property type="molecule type" value="Genomic_DNA"/>
</dbReference>
<dbReference type="RefSeq" id="XP_809644.1">
    <property type="nucleotide sequence ID" value="XM_804551.1"/>
</dbReference>
<dbReference type="SMR" id="Q4D5J7"/>
<dbReference type="FunCoup" id="Q4D5J7">
    <property type="interactions" value="295"/>
</dbReference>
<dbReference type="STRING" id="353153.Q4D5J7"/>
<dbReference type="PaxDb" id="353153-Q4D5J7"/>
<dbReference type="EnsemblProtists" id="EAN87793">
    <property type="protein sequence ID" value="EAN87793"/>
    <property type="gene ID" value="Tc00.1047053510989.10"/>
</dbReference>
<dbReference type="GeneID" id="3540291"/>
<dbReference type="KEGG" id="tcr:510989.10"/>
<dbReference type="eggNOG" id="KOG3072">
    <property type="taxonomic scope" value="Eukaryota"/>
</dbReference>
<dbReference type="InParanoid" id="Q4D5J7"/>
<dbReference type="OMA" id="PIIFLHW"/>
<dbReference type="Proteomes" id="UP000002296">
    <property type="component" value="Unassembled WGS sequence"/>
</dbReference>
<dbReference type="GO" id="GO:0005789">
    <property type="term" value="C:endoplasmic reticulum membrane"/>
    <property type="evidence" value="ECO:0007669"/>
    <property type="project" value="TreeGrafter"/>
</dbReference>
<dbReference type="GO" id="GO:0009922">
    <property type="term" value="F:fatty acid elongase activity"/>
    <property type="evidence" value="ECO:0007669"/>
    <property type="project" value="UniProtKB-EC"/>
</dbReference>
<dbReference type="GO" id="GO:0034625">
    <property type="term" value="P:fatty acid elongation, monounsaturated fatty acid"/>
    <property type="evidence" value="ECO:0007669"/>
    <property type="project" value="TreeGrafter"/>
</dbReference>
<dbReference type="GO" id="GO:0034626">
    <property type="term" value="P:fatty acid elongation, polyunsaturated fatty acid"/>
    <property type="evidence" value="ECO:0007669"/>
    <property type="project" value="TreeGrafter"/>
</dbReference>
<dbReference type="GO" id="GO:0019367">
    <property type="term" value="P:fatty acid elongation, saturated fatty acid"/>
    <property type="evidence" value="ECO:0007669"/>
    <property type="project" value="TreeGrafter"/>
</dbReference>
<dbReference type="GO" id="GO:0030148">
    <property type="term" value="P:sphingolipid biosynthetic process"/>
    <property type="evidence" value="ECO:0007669"/>
    <property type="project" value="TreeGrafter"/>
</dbReference>
<dbReference type="GO" id="GO:0042761">
    <property type="term" value="P:very long-chain fatty acid biosynthetic process"/>
    <property type="evidence" value="ECO:0007669"/>
    <property type="project" value="TreeGrafter"/>
</dbReference>
<dbReference type="InterPro" id="IPR030457">
    <property type="entry name" value="ELO_CS"/>
</dbReference>
<dbReference type="InterPro" id="IPR002076">
    <property type="entry name" value="ELO_fam"/>
</dbReference>
<dbReference type="PANTHER" id="PTHR11157:SF17">
    <property type="entry name" value="ELONGATION OF VERY LONG CHAIN FATTY ACIDS PROTEIN 6"/>
    <property type="match status" value="1"/>
</dbReference>
<dbReference type="PANTHER" id="PTHR11157">
    <property type="entry name" value="FATTY ACID ACYL TRANSFERASE-RELATED"/>
    <property type="match status" value="1"/>
</dbReference>
<dbReference type="Pfam" id="PF01151">
    <property type="entry name" value="ELO"/>
    <property type="match status" value="1"/>
</dbReference>
<dbReference type="PROSITE" id="PS01188">
    <property type="entry name" value="ELO"/>
    <property type="match status" value="1"/>
</dbReference>
<reference evidence="8" key="1">
    <citation type="journal article" date="2005" name="Science">
        <title>The genome sequence of Trypanosoma cruzi, etiologic agent of Chagas disease.</title>
        <authorList>
            <person name="El-Sayed N.M.A."/>
            <person name="Myler P.J."/>
            <person name="Bartholomeu D.C."/>
            <person name="Nilsson D."/>
            <person name="Aggarwal G."/>
            <person name="Tran A.-N."/>
            <person name="Ghedin E."/>
            <person name="Worthey E.A."/>
            <person name="Delcher A.L."/>
            <person name="Blandin G."/>
            <person name="Westenberger S.J."/>
            <person name="Caler E."/>
            <person name="Cerqueira G.C."/>
            <person name="Branche C."/>
            <person name="Haas B."/>
            <person name="Anupama A."/>
            <person name="Arner E."/>
            <person name="Aslund L."/>
            <person name="Attipoe P."/>
            <person name="Bontempi E."/>
            <person name="Bringaud F."/>
            <person name="Burton P."/>
            <person name="Cadag E."/>
            <person name="Campbell D.A."/>
            <person name="Carrington M."/>
            <person name="Crabtree J."/>
            <person name="Darban H."/>
            <person name="da Silveira J.F."/>
            <person name="de Jong P."/>
            <person name="Edwards K."/>
            <person name="Englund P.T."/>
            <person name="Fazelina G."/>
            <person name="Feldblyum T."/>
            <person name="Ferella M."/>
            <person name="Frasch A.C."/>
            <person name="Gull K."/>
            <person name="Horn D."/>
            <person name="Hou L."/>
            <person name="Huang Y."/>
            <person name="Kindlund E."/>
            <person name="Klingbeil M."/>
            <person name="Kluge S."/>
            <person name="Koo H."/>
            <person name="Lacerda D."/>
            <person name="Levin M.J."/>
            <person name="Lorenzi H."/>
            <person name="Louie T."/>
            <person name="Machado C.R."/>
            <person name="McCulloch R."/>
            <person name="McKenna A."/>
            <person name="Mizuno Y."/>
            <person name="Mottram J.C."/>
            <person name="Nelson S."/>
            <person name="Ochaya S."/>
            <person name="Osoegawa K."/>
            <person name="Pai G."/>
            <person name="Parsons M."/>
            <person name="Pentony M."/>
            <person name="Pettersson U."/>
            <person name="Pop M."/>
            <person name="Ramirez J.L."/>
            <person name="Rinta J."/>
            <person name="Robertson L."/>
            <person name="Salzberg S.L."/>
            <person name="Sanchez D.O."/>
            <person name="Seyler A."/>
            <person name="Sharma R."/>
            <person name="Shetty J."/>
            <person name="Simpson A.J."/>
            <person name="Sisk E."/>
            <person name="Tammi M.T."/>
            <person name="Tarleton R."/>
            <person name="Teixeira S."/>
            <person name="Van Aken S."/>
            <person name="Vogt C."/>
            <person name="Ward P.N."/>
            <person name="Wickstead B."/>
            <person name="Wortman J."/>
            <person name="White O."/>
            <person name="Fraser C.M."/>
            <person name="Stuart K.D."/>
            <person name="Andersson B."/>
        </authorList>
    </citation>
    <scope>NUCLEOTIDE SEQUENCE [LARGE SCALE GENOMIC DNA]</scope>
    <source>
        <strain evidence="8">CL Brener</strain>
    </source>
</reference>
<reference evidence="6" key="2">
    <citation type="journal article" date="2015" name="Parasitol. Res.">
        <title>Biosynthesis of very long chain fatty acids in Trypanosoma cruzi.</title>
        <authorList>
            <person name="Livore V.I."/>
            <person name="Uttaro A.D."/>
        </authorList>
    </citation>
    <scope>FUNCTION</scope>
    <scope>VARIANT CYS-12</scope>
</reference>
<comment type="function">
    <text evidence="4">Involved in the synthesis of fatty acids (PubMed:25339514). Elongates C16:0 and C18:0 fatty acids to C26:0, with C24:0 being the main product (PubMed:25339514).</text>
</comment>
<comment type="catalytic activity">
    <reaction evidence="3">
        <text>a very-long-chain acyl-CoA + malonyl-CoA + H(+) = a very-long-chain 3-oxoacyl-CoA + CO2 + CoA</text>
        <dbReference type="Rhea" id="RHEA:32727"/>
        <dbReference type="ChEBI" id="CHEBI:15378"/>
        <dbReference type="ChEBI" id="CHEBI:16526"/>
        <dbReference type="ChEBI" id="CHEBI:57287"/>
        <dbReference type="ChEBI" id="CHEBI:57384"/>
        <dbReference type="ChEBI" id="CHEBI:90725"/>
        <dbReference type="ChEBI" id="CHEBI:90736"/>
        <dbReference type="EC" id="2.3.1.199"/>
    </reaction>
    <physiologicalReaction direction="left-to-right" evidence="6">
        <dbReference type="Rhea" id="RHEA:32728"/>
    </physiologicalReaction>
</comment>
<comment type="subcellular location">
    <subcellularLocation>
        <location evidence="2">Membrane</location>
        <topology evidence="2">Multi-pass membrane protein</topology>
    </subcellularLocation>
</comment>
<comment type="similarity">
    <text evidence="3">Belongs to the ELO family.</text>
</comment>
<comment type="caution">
    <text evidence="4">In the reported experiments, the sequence appears to be a hybrid between the two predicted loci ELO4A and ELO4B which are highly similar.</text>
</comment>
<proteinExistence type="inferred from homology"/>
<sequence>MDFVLNTIQWLREVPRNFKGEVATVVFDDSADILVYCCVLYILLVFMVPEHIMKNREPFNLRLPFVVWNIGLCLFSICGAYSCVKNMTALYWERGFYRTTCFFDSSVAYDGEFAFWVFYFILSKIPEMIDTVFLVFQKKPVIFLHWYHHLTVAIFCWHAGHALIPSGLWFATMNYCVHSIMYFYYFMCACGMRKVIRPIAPFITMMQLLQMVAGTLIVLYTAYHSYLSESGCEVDRTSIRLGLVMYGSYFFLFAVLFGKLYLKKQVKPSGTASAYAMSKKRNGEKMA</sequence>
<evidence type="ECO:0000250" key="1">
    <source>
        <dbReference type="UniProtKB" id="A1L3X0"/>
    </source>
</evidence>
<evidence type="ECO:0000255" key="2"/>
<evidence type="ECO:0000255" key="3">
    <source>
        <dbReference type="RuleBase" id="RU361115"/>
    </source>
</evidence>
<evidence type="ECO:0000269" key="4">
    <source>
    </source>
</evidence>
<evidence type="ECO:0000303" key="5">
    <source>
    </source>
</evidence>
<evidence type="ECO:0000305" key="6"/>
<evidence type="ECO:0000312" key="7">
    <source>
        <dbReference type="EMBL" id="EAN87793.1"/>
    </source>
</evidence>
<evidence type="ECO:0000312" key="8">
    <source>
        <dbReference type="Proteomes" id="UP000002296"/>
    </source>
</evidence>